<accession>Q69091</accession>
<accession>B9VQK0</accession>
<accession>O12544</accession>
<accession>O12833</accession>
<accession>P03171</accession>
<accession>Q09I71</accession>
<organismHost>
    <name type="scientific">Homo sapiens</name>
    <name type="common">Human</name>
    <dbReference type="NCBI Taxonomy" id="9606"/>
</organismHost>
<reference key="1">
    <citation type="journal article" date="1985" name="J. Mol. Biol.">
        <title>Sequence determination and genetic content of the short unique region in the genome of herpes simplex virus type 1.</title>
        <authorList>
            <person name="McGeoch D.J."/>
            <person name="Dolan A."/>
            <person name="Donald S."/>
            <person name="Rixon F.J."/>
        </authorList>
    </citation>
    <scope>NUCLEOTIDE SEQUENCE [GENOMIC DNA]</scope>
</reference>
<reference key="2">
    <citation type="journal article" date="1988" name="J. Gen. Virol.">
        <title>The DNA sequences of the long repeat region and adjoining parts of the long unique region in the genome of herpes simplex virus type 1.</title>
        <authorList>
            <person name="Perry L.J."/>
            <person name="McGeoch D.J."/>
        </authorList>
    </citation>
    <scope>NUCLEOTIDE SEQUENCE [GENOMIC DNA]</scope>
</reference>
<reference key="3">
    <citation type="journal article" date="2007" name="Microbes Infect.">
        <title>Determination and analysis of the DNA sequence of highly attenuated herpes simplex virus type 1 mutant HF10, a potential oncolytic virus.</title>
        <authorList>
            <person name="Ushijima Y."/>
            <person name="Luo C."/>
            <person name="Goshima F."/>
            <person name="Yamauchi Y."/>
            <person name="Kimura H."/>
            <person name="Nishiyama Y."/>
        </authorList>
    </citation>
    <scope>NUCLEOTIDE SEQUENCE [LARGE SCALE GENOMIC DNA]</scope>
    <source>
        <strain>Nonneuroinvasive mutant HF10</strain>
    </source>
</reference>
<reference key="4">
    <citation type="submission" date="2008-12" db="EMBL/GenBank/DDBJ databases">
        <title>Herpes simplex virus type 1 bacterial artificial chromosome.</title>
        <authorList>
            <person name="Cunningham C."/>
            <person name="Davison A.J."/>
        </authorList>
    </citation>
    <scope>NUCLEOTIDE SEQUENCE [LARGE SCALE GENOMIC DNA]</scope>
    <source>
        <strain>17 syn+</strain>
    </source>
</reference>
<reference key="5">
    <citation type="journal article" date="1992" name="J. Virol.">
        <title>Disulfide bond structure of glycoprotein D of herpes simplex virus types 1 and 2.</title>
        <authorList>
            <person name="Long D."/>
            <person name="Wilcox W.C."/>
            <person name="Abrams W.R."/>
            <person name="Cohen G.H."/>
            <person name="Eisenberg R.J."/>
        </authorList>
    </citation>
    <scope>DISULFIDE BONDS</scope>
</reference>
<reference key="6">
    <citation type="journal article" date="2007" name="J. Virol.">
        <title>Complexes between herpes simplex virus glycoproteins gD, gB, and gH detected in cells by complementation of split enhanced green fluorescent protein.</title>
        <authorList>
            <person name="Avitabile E."/>
            <person name="Forghieri C."/>
            <person name="Campadelli-Fiume G."/>
        </authorList>
    </citation>
    <scope>IDENTIFICATION IN A COMPLEX WITH GB AND GH</scope>
</reference>
<reference key="7">
    <citation type="journal article" date="2009" name="J. Virol.">
        <title>Virion incorporation of the herpes simplex virus type 1 tegument protein VP22 occurs via glycoprotein E-specific recruitment to the late secretory pathway.</title>
        <authorList>
            <person name="Stylianou J."/>
            <person name="Maringer K."/>
            <person name="Cook R."/>
            <person name="Bernard E."/>
            <person name="Elliott G."/>
        </authorList>
    </citation>
    <scope>LACK OF INTERACTION WITH VP22</scope>
</reference>
<reference key="8">
    <citation type="journal article" date="2019" name="Front. Immunol.">
        <title>The Interaction Mechanism Between Herpes Simplex Virus 1 Glycoprotein D and Host Antiviral Protein Viperin.</title>
        <authorList>
            <person name="Li M."/>
            <person name="Liao Z."/>
            <person name="Xu Z."/>
            <person name="Zou X."/>
            <person name="Wang Y."/>
            <person name="Peng H."/>
            <person name="Li Y."/>
            <person name="Ou X."/>
            <person name="Deng Y."/>
            <person name="Guo Y."/>
            <person name="Gan W."/>
            <person name="Peng T."/>
            <person name="Chen D."/>
            <person name="Cai M."/>
        </authorList>
    </citation>
    <scope>INTERACTION WITH HOST RSAD2</scope>
    <scope>SUBCELLULAR LOCATION</scope>
</reference>
<reference evidence="11" key="9">
    <citation type="journal article" date="2011" name="Nat. Commun.">
        <title>Binding of herpes simplex virus glycoprotein D to nectin-1 exploits host cell adhesion.</title>
        <authorList>
            <person name="Zhang N."/>
            <person name="Yan J."/>
            <person name="Lu G."/>
            <person name="Guo Z."/>
            <person name="Fan Z."/>
            <person name="Wang J."/>
            <person name="Shi Y."/>
            <person name="Qi J."/>
            <person name="Gao G.F."/>
        </authorList>
    </citation>
    <scope>X-RAY CRYSTALLOGRAPHY (2.5 ANGSTROMS) OF 26-310 IN COMPLEX WITH HOST NECTIN1</scope>
    <scope>FUNCTION</scope>
</reference>
<gene>
    <name type="primary">gD</name>
    <name type="ORF">US6</name>
</gene>
<name>GD_HHV11</name>
<keyword id="KW-0002">3D-structure</keyword>
<keyword id="KW-1015">Disulfide bond</keyword>
<keyword id="KW-0325">Glycoprotein</keyword>
<keyword id="KW-1040">Host Golgi apparatus</keyword>
<keyword id="KW-0945">Host-virus interaction</keyword>
<keyword id="KW-0472">Membrane</keyword>
<keyword id="KW-0479">Metal-binding</keyword>
<keyword id="KW-1185">Reference proteome</keyword>
<keyword id="KW-0732">Signal</keyword>
<keyword id="KW-0812">Transmembrane</keyword>
<keyword id="KW-1133">Transmembrane helix</keyword>
<keyword id="KW-1161">Viral attachment to host cell</keyword>
<keyword id="KW-1234">Viral attachment to host entry receptor</keyword>
<keyword id="KW-0261">Viral envelope protein</keyword>
<keyword id="KW-0946">Virion</keyword>
<keyword id="KW-1160">Virus entry into host cell</keyword>
<keyword id="KW-0862">Zinc</keyword>
<evidence type="ECO:0000250" key="1">
    <source>
        <dbReference type="UniProtKB" id="P57083"/>
    </source>
</evidence>
<evidence type="ECO:0000250" key="2">
    <source>
        <dbReference type="UniProtKB" id="Q05059"/>
    </source>
</evidence>
<evidence type="ECO:0000255" key="3"/>
<evidence type="ECO:0000256" key="4">
    <source>
        <dbReference type="SAM" id="MobiDB-lite"/>
    </source>
</evidence>
<evidence type="ECO:0000269" key="5">
    <source>
    </source>
</evidence>
<evidence type="ECO:0000269" key="6">
    <source>
    </source>
</evidence>
<evidence type="ECO:0000269" key="7">
    <source>
    </source>
</evidence>
<evidence type="ECO:0000269" key="8">
    <source>
    </source>
</evidence>
<evidence type="ECO:0000269" key="9">
    <source>
    </source>
</evidence>
<evidence type="ECO:0000305" key="10"/>
<evidence type="ECO:0007744" key="11">
    <source>
        <dbReference type="PDB" id="3U82"/>
    </source>
</evidence>
<evidence type="ECO:0007829" key="12">
    <source>
        <dbReference type="PDB" id="3U82"/>
    </source>
</evidence>
<proteinExistence type="evidence at protein level"/>
<organism>
    <name type="scientific">Human herpesvirus 1 (strain 17)</name>
    <name type="common">HHV-1</name>
    <name type="synonym">Human herpes simplex virus 1</name>
    <dbReference type="NCBI Taxonomy" id="10299"/>
    <lineage>
        <taxon>Viruses</taxon>
        <taxon>Duplodnaviria</taxon>
        <taxon>Heunggongvirae</taxon>
        <taxon>Peploviricota</taxon>
        <taxon>Herviviricetes</taxon>
        <taxon>Herpesvirales</taxon>
        <taxon>Orthoherpesviridae</taxon>
        <taxon>Alphaherpesvirinae</taxon>
        <taxon>Simplexvirus</taxon>
        <taxon>Simplexvirus humanalpha1</taxon>
        <taxon>Human herpesvirus 1</taxon>
    </lineage>
</organism>
<feature type="signal peptide" evidence="3">
    <location>
        <begin position="1"/>
        <end position="25"/>
    </location>
</feature>
<feature type="chain" id="PRO_0000038213" description="Envelope glycoprotein D">
    <location>
        <begin position="26"/>
        <end position="394"/>
    </location>
</feature>
<feature type="topological domain" description="Virion surface" evidence="3">
    <location>
        <begin position="26"/>
        <end position="340"/>
    </location>
</feature>
<feature type="transmembrane region" description="Helical" evidence="3">
    <location>
        <begin position="341"/>
        <end position="361"/>
    </location>
</feature>
<feature type="topological domain" description="Intravirion" evidence="3">
    <location>
        <begin position="362"/>
        <end position="394"/>
    </location>
</feature>
<feature type="region of interest" description="Interaction with TNFRSF14" evidence="1">
    <location>
        <begin position="26"/>
        <end position="57"/>
    </location>
</feature>
<feature type="region of interest" description="Profusion" evidence="2">
    <location>
        <begin position="261"/>
        <end position="305"/>
    </location>
</feature>
<feature type="region of interest" description="Disordered" evidence="4">
    <location>
        <begin position="275"/>
        <end position="301"/>
    </location>
</feature>
<feature type="region of interest" description="Disordered" evidence="4">
    <location>
        <begin position="375"/>
        <end position="394"/>
    </location>
</feature>
<feature type="binding site" evidence="1">
    <location>
        <position position="64"/>
    </location>
    <ligand>
        <name>Zn(2+)</name>
        <dbReference type="ChEBI" id="CHEBI:29105"/>
        <note>ligand shared between dimeric partners</note>
    </ligand>
</feature>
<feature type="binding site" evidence="1">
    <location>
        <position position="240"/>
    </location>
    <ligand>
        <name>Zn(2+)</name>
        <dbReference type="ChEBI" id="CHEBI:29105"/>
        <note>ligand shared between dimeric partners</note>
    </ligand>
</feature>
<feature type="glycosylation site" description="N-linked (GlcNAc...) asparagine; by host" evidence="3">
    <location>
        <position position="119"/>
    </location>
</feature>
<feature type="glycosylation site" description="N-linked (GlcNAc...) asparagine; by host" evidence="3">
    <location>
        <position position="146"/>
    </location>
</feature>
<feature type="glycosylation site" description="N-linked (GlcNAc...) asparagine; by host" evidence="3">
    <location>
        <position position="287"/>
    </location>
</feature>
<feature type="disulfide bond" evidence="5">
    <location>
        <begin position="91"/>
        <end position="214"/>
    </location>
</feature>
<feature type="disulfide bond" evidence="5">
    <location>
        <begin position="131"/>
        <end position="227"/>
    </location>
</feature>
<feature type="disulfide bond" evidence="5">
    <location>
        <begin position="143"/>
        <end position="152"/>
    </location>
</feature>
<feature type="sequence variant">
    <original>S</original>
    <variation>G</variation>
    <location>
        <position position="25"/>
    </location>
</feature>
<feature type="sequence variant" description="In strain: Nonneuroinvasive mutant HF10.">
    <original>V</original>
    <variation>A</variation>
    <location>
        <position position="30"/>
    </location>
</feature>
<feature type="sequence variant" description="In strain: Nonneuroinvasive mutant HF10.">
    <original>L</original>
    <variation>I</variation>
    <location>
        <position position="218"/>
    </location>
</feature>
<feature type="sequence variant" description="In strain: Nonneuroinvasive mutant HF10.">
    <original>A</original>
    <variation>V</variation>
    <location>
        <position position="353"/>
    </location>
</feature>
<feature type="sequence variant" description="In strain: Nonneuroinvasive mutant HF10.">
    <original>H</original>
    <variation>R</variation>
    <location>
        <position position="367"/>
    </location>
</feature>
<feature type="strand" evidence="12">
    <location>
        <begin position="60"/>
        <end position="63"/>
    </location>
</feature>
<feature type="strand" evidence="12">
    <location>
        <begin position="65"/>
        <end position="68"/>
    </location>
</feature>
<feature type="strand" evidence="12">
    <location>
        <begin position="82"/>
        <end position="87"/>
    </location>
</feature>
<feature type="strand" evidence="12">
    <location>
        <begin position="92"/>
        <end position="96"/>
    </location>
</feature>
<feature type="helix" evidence="12">
    <location>
        <begin position="102"/>
        <end position="107"/>
    </location>
</feature>
<feature type="helix" evidence="12">
    <location>
        <begin position="111"/>
        <end position="114"/>
    </location>
</feature>
<feature type="strand" evidence="12">
    <location>
        <begin position="118"/>
        <end position="128"/>
    </location>
</feature>
<feature type="strand" evidence="12">
    <location>
        <begin position="131"/>
        <end position="143"/>
    </location>
</feature>
<feature type="strand" evidence="12">
    <location>
        <begin position="153"/>
        <end position="156"/>
    </location>
</feature>
<feature type="strand" evidence="12">
    <location>
        <begin position="159"/>
        <end position="162"/>
    </location>
</feature>
<feature type="turn" evidence="12">
    <location>
        <begin position="164"/>
        <end position="166"/>
    </location>
</feature>
<feature type="strand" evidence="12">
    <location>
        <begin position="167"/>
        <end position="169"/>
    </location>
</feature>
<feature type="strand" evidence="12">
    <location>
        <begin position="176"/>
        <end position="180"/>
    </location>
</feature>
<feature type="helix" evidence="12">
    <location>
        <begin position="183"/>
        <end position="185"/>
    </location>
</feature>
<feature type="strand" evidence="12">
    <location>
        <begin position="187"/>
        <end position="195"/>
    </location>
</feature>
<feature type="strand" evidence="12">
    <location>
        <begin position="198"/>
        <end position="212"/>
    </location>
</feature>
<feature type="helix" evidence="12">
    <location>
        <begin position="224"/>
        <end position="226"/>
    </location>
</feature>
<feature type="helix" evidence="12">
    <location>
        <begin position="230"/>
        <end position="235"/>
    </location>
</feature>
<feature type="turn" evidence="12">
    <location>
        <begin position="239"/>
        <end position="243"/>
    </location>
</feature>
<feature type="helix" evidence="12">
    <location>
        <begin position="250"/>
        <end position="264"/>
    </location>
</feature>
<comment type="function">
    <text evidence="2 8">Envelope glycoprotein that binds to the host cell entry receptors NECTIN1, TNFRSF14/HVEM and 3-O-sulfated heparan sulfate, promoting the virus entry into host cells (PubMed:22146396). May trigger fusion with host membrane, by recruiting the fusion machinery composed of gB and gH/gL (By similarity).</text>
</comment>
<comment type="subunit">
    <text evidence="2 6 7 9 10">Homodimer (Probable). Interacts with host receptor TNFRSF14. Interacts with host receptor NECTIN1 (By similarity). Interacts (via profusion domain) with gB; this interaction occurs in the absence of gH/gL. Interacts (via profusion domain) with gH/gL heterodimer; this interaction occurs in the absence of gB. Associates with the gB-gH/gL-gD complex (PubMed:17670828). Interacts (via C-terminus) with UL11 tegument protein. Interacts (via C-terminus) with VP22 tegument protein (By similarity); this interaction has been demonstrated in other strains, but might be very weak since PubMed:19279114 has failed to see it. Interacts with host RSAD2 (PubMed:31921110).</text>
</comment>
<comment type="interaction">
    <interactant intactId="EBI-11691180">
        <id>Q69091</id>
    </interactant>
    <interactant intactId="EBI-11691211">
        <id>Q9GL76</id>
        <label>NECTIN1</label>
    </interactant>
    <organismsDiffer>true</organismsDiffer>
    <experiments>4</experiments>
</comment>
<comment type="subcellular location">
    <subcellularLocation>
        <location evidence="2">Virion membrane</location>
        <topology evidence="3">Single-pass type I membrane protein</topology>
    </subcellularLocation>
    <subcellularLocation>
        <location evidence="9">Host Golgi apparatus</location>
    </subcellularLocation>
    <text evidence="9">During virion morphogenesis, this protein probably accumulates in the endosomes and trans-Golgi where secondary envelopment occurs.</text>
</comment>
<comment type="similarity">
    <text evidence="10">Belongs to the herpesviridae glycoprotein D family.</text>
</comment>
<protein>
    <recommendedName>
        <fullName>Envelope glycoprotein D</fullName>
        <shortName>gD</shortName>
    </recommendedName>
</protein>
<sequence length="394" mass="43347">MGGAAARLGAVILFVVIVGLHGVRSKYALVDASLKMADPNRFRGKDLPVLDQLTDPPGVRRVYHIQAGLPDPFQPPSLPITVYYAVLERACRSVLLNAPSEAPQIVRGASEDVRKQPYNLTIAWFRMGGNCAIPITVMEYTECSYNKSLGACPIRTQPRWNYYDSFSAVSEDNLGFLMHAPAFETAGTYLRLVKINDWTEITQFILEHRAKGSCKYALPLRIPPSACLSPQAYQQGVTVDSIGMLPRFIPENQRTVAVYSLKIAGWHGPKAPYTSTLLPPELSETPNATQPELAPEDPEDSALLEDPVGTVAPQIPPNWHIPSIQDAATPYHPPATPNNMGLIAGAVGGSLLAALVICGIVYWMRRHTQKAPKRIRLPHIREDDQPSSHQPLFY</sequence>
<dbReference type="EMBL" id="X14112">
    <property type="protein sequence ID" value="CAA32283.1"/>
    <property type="molecule type" value="Genomic_DNA"/>
</dbReference>
<dbReference type="EMBL" id="L00036">
    <property type="protein sequence ID" value="AAA96682.1"/>
    <property type="molecule type" value="Genomic_DNA"/>
</dbReference>
<dbReference type="EMBL" id="DQ889502">
    <property type="protein sequence ID" value="ABI63524.1"/>
    <property type="molecule type" value="Genomic_DNA"/>
</dbReference>
<dbReference type="EMBL" id="FJ593289">
    <property type="protein sequence ID" value="ACM62295.1"/>
    <property type="molecule type" value="Genomic_DNA"/>
</dbReference>
<dbReference type="PIR" id="A03730">
    <property type="entry name" value="VGBE17"/>
</dbReference>
<dbReference type="RefSeq" id="YP_009137141.1">
    <property type="nucleotide sequence ID" value="NC_001806.2"/>
</dbReference>
<dbReference type="PDB" id="3U82">
    <property type="method" value="X-ray"/>
    <property type="resolution" value="3.16 A"/>
    <property type="chains" value="A=26-310"/>
</dbReference>
<dbReference type="PDBsum" id="3U82"/>
<dbReference type="BMRB" id="Q69091"/>
<dbReference type="SMR" id="Q69091"/>
<dbReference type="IntAct" id="Q69091">
    <property type="interactions" value="2"/>
</dbReference>
<dbReference type="ChEMBL" id="CHEMBL2364696"/>
<dbReference type="DrugCentral" id="Q69091"/>
<dbReference type="TCDB" id="1.G.10.1.1">
    <property type="family name" value="the herpes simplex virus membrane fusion complex (hsv-mfc) family"/>
</dbReference>
<dbReference type="GlyCosmos" id="Q69091">
    <property type="glycosylation" value="3 sites, No reported glycans"/>
</dbReference>
<dbReference type="DNASU" id="2703444"/>
<dbReference type="GeneID" id="2703444"/>
<dbReference type="KEGG" id="vg:2703444"/>
<dbReference type="EvolutionaryTrace" id="Q69091"/>
<dbReference type="PRO" id="PR:Q69091"/>
<dbReference type="Proteomes" id="UP000009294">
    <property type="component" value="Segment"/>
</dbReference>
<dbReference type="Proteomes" id="UP000180652">
    <property type="component" value="Segment"/>
</dbReference>
<dbReference type="GO" id="GO:0044177">
    <property type="term" value="C:host cell Golgi apparatus"/>
    <property type="evidence" value="ECO:0007669"/>
    <property type="project" value="UniProtKB-SubCell"/>
</dbReference>
<dbReference type="GO" id="GO:0016020">
    <property type="term" value="C:membrane"/>
    <property type="evidence" value="ECO:0007669"/>
    <property type="project" value="UniProtKB-KW"/>
</dbReference>
<dbReference type="GO" id="GO:0019031">
    <property type="term" value="C:viral envelope"/>
    <property type="evidence" value="ECO:0000314"/>
    <property type="project" value="CAFA"/>
</dbReference>
<dbReference type="GO" id="GO:0055036">
    <property type="term" value="C:virion membrane"/>
    <property type="evidence" value="ECO:0000250"/>
    <property type="project" value="UniProt"/>
</dbReference>
<dbReference type="GO" id="GO:0046872">
    <property type="term" value="F:metal ion binding"/>
    <property type="evidence" value="ECO:0007669"/>
    <property type="project" value="UniProtKB-KW"/>
</dbReference>
<dbReference type="GO" id="GO:0048018">
    <property type="term" value="F:receptor ligand activity"/>
    <property type="evidence" value="ECO:0000314"/>
    <property type="project" value="UniProt"/>
</dbReference>
<dbReference type="GO" id="GO:0098670">
    <property type="term" value="P:entry receptor-mediated virion attachment to host cell"/>
    <property type="evidence" value="ECO:0007669"/>
    <property type="project" value="UniProtKB-KW"/>
</dbReference>
<dbReference type="GO" id="GO:0046718">
    <property type="term" value="P:symbiont entry into host cell"/>
    <property type="evidence" value="ECO:0000314"/>
    <property type="project" value="UniProt"/>
</dbReference>
<dbReference type="CDD" id="cd12087">
    <property type="entry name" value="TM_EGFR-like"/>
    <property type="match status" value="1"/>
</dbReference>
<dbReference type="FunFam" id="2.70.230.10:FF:000001">
    <property type="entry name" value="Envelope glycoprotein D"/>
    <property type="match status" value="1"/>
</dbReference>
<dbReference type="Gene3D" id="2.70.230.10">
    <property type="match status" value="1"/>
</dbReference>
<dbReference type="InterPro" id="IPR002896">
    <property type="entry name" value="Herpes_glycop_dom"/>
</dbReference>
<dbReference type="InterPro" id="IPR036179">
    <property type="entry name" value="Ig-like_dom_sf"/>
</dbReference>
<dbReference type="Pfam" id="PF01537">
    <property type="entry name" value="Herpes_glycop_D"/>
    <property type="match status" value="1"/>
</dbReference>
<dbReference type="SUPFAM" id="SSF48726">
    <property type="entry name" value="Immunoglobulin"/>
    <property type="match status" value="1"/>
</dbReference>